<protein>
    <recommendedName>
        <fullName evidence="1">Adenylate kinase</fullName>
        <ecNumber evidence="1">2.7.4.3</ecNumber>
    </recommendedName>
    <alternativeName>
        <fullName evidence="1">ATP-AMP transphosphorylase</fullName>
    </alternativeName>
    <alternativeName>
        <fullName evidence="1">ATP:AMP phosphotransferase</fullName>
    </alternativeName>
    <alternativeName>
        <fullName evidence="1">Adenylate kinase cytosolic and mitochondrial</fullName>
    </alternativeName>
    <alternativeName>
        <fullName evidence="1">Adenylate monophosphate kinase</fullName>
    </alternativeName>
</protein>
<name>KAD2_ANOGA</name>
<keyword id="KW-0067">ATP-binding</keyword>
<keyword id="KW-0963">Cytoplasm</keyword>
<keyword id="KW-0418">Kinase</keyword>
<keyword id="KW-0496">Mitochondrion</keyword>
<keyword id="KW-0547">Nucleotide-binding</keyword>
<keyword id="KW-1185">Reference proteome</keyword>
<keyword id="KW-0808">Transferase</keyword>
<feature type="chain" id="PRO_0000365701" description="Adenylate kinase">
    <location>
        <begin position="1"/>
        <end position="240"/>
    </location>
</feature>
<feature type="region of interest" description="NMP" evidence="1">
    <location>
        <begin position="48"/>
        <end position="77"/>
    </location>
</feature>
<feature type="region of interest" description="LID" evidence="1">
    <location>
        <begin position="144"/>
        <end position="181"/>
    </location>
</feature>
<feature type="binding site" evidence="1">
    <location>
        <begin position="28"/>
        <end position="33"/>
    </location>
    <ligand>
        <name>ATP</name>
        <dbReference type="ChEBI" id="CHEBI:30616"/>
    </ligand>
</feature>
<feature type="binding site" evidence="1">
    <location>
        <position position="49"/>
    </location>
    <ligand>
        <name>AMP</name>
        <dbReference type="ChEBI" id="CHEBI:456215"/>
    </ligand>
</feature>
<feature type="binding site" evidence="1">
    <location>
        <position position="54"/>
    </location>
    <ligand>
        <name>AMP</name>
        <dbReference type="ChEBI" id="CHEBI:456215"/>
    </ligand>
</feature>
<feature type="binding site" evidence="1">
    <location>
        <begin position="75"/>
        <end position="77"/>
    </location>
    <ligand>
        <name>AMP</name>
        <dbReference type="ChEBI" id="CHEBI:456215"/>
    </ligand>
</feature>
<feature type="binding site" evidence="1">
    <location>
        <begin position="103"/>
        <end position="106"/>
    </location>
    <ligand>
        <name>AMP</name>
        <dbReference type="ChEBI" id="CHEBI:456215"/>
    </ligand>
</feature>
<feature type="binding site" evidence="1">
    <location>
        <position position="110"/>
    </location>
    <ligand>
        <name>AMP</name>
        <dbReference type="ChEBI" id="CHEBI:456215"/>
    </ligand>
</feature>
<feature type="binding site" evidence="1">
    <location>
        <position position="145"/>
    </location>
    <ligand>
        <name>ATP</name>
        <dbReference type="ChEBI" id="CHEBI:30616"/>
    </ligand>
</feature>
<feature type="binding site" evidence="1">
    <location>
        <begin position="154"/>
        <end position="155"/>
    </location>
    <ligand>
        <name>ATP</name>
        <dbReference type="ChEBI" id="CHEBI:30616"/>
    </ligand>
</feature>
<feature type="binding site" evidence="1">
    <location>
        <position position="178"/>
    </location>
    <ligand>
        <name>AMP</name>
        <dbReference type="ChEBI" id="CHEBI:456215"/>
    </ligand>
</feature>
<feature type="binding site" evidence="1">
    <location>
        <position position="189"/>
    </location>
    <ligand>
        <name>AMP</name>
        <dbReference type="ChEBI" id="CHEBI:456215"/>
    </ligand>
</feature>
<feature type="binding site" evidence="1">
    <location>
        <position position="217"/>
    </location>
    <ligand>
        <name>ATP</name>
        <dbReference type="ChEBI" id="CHEBI:30616"/>
    </ligand>
</feature>
<comment type="function">
    <text evidence="1">Catalyzes the reversible transfer of the terminal phosphate group between ATP and AMP. Plays an important role in cellular energy homeostasis and in adenine nucleotide metabolism. Adenylate kinase activity is critical for regulation of the phosphate utilization and the AMP de novo biosynthesis pathways.</text>
</comment>
<comment type="catalytic activity">
    <reaction evidence="1">
        <text>AMP + ATP = 2 ADP</text>
        <dbReference type="Rhea" id="RHEA:12973"/>
        <dbReference type="ChEBI" id="CHEBI:30616"/>
        <dbReference type="ChEBI" id="CHEBI:456215"/>
        <dbReference type="ChEBI" id="CHEBI:456216"/>
        <dbReference type="EC" id="2.7.4.3"/>
    </reaction>
</comment>
<comment type="subunit">
    <text evidence="1">Monomer.</text>
</comment>
<comment type="subcellular location">
    <subcellularLocation>
        <location evidence="1">Cytoplasm</location>
        <location evidence="1">Cytosol</location>
    </subcellularLocation>
    <subcellularLocation>
        <location evidence="1">Mitochondrion intermembrane space</location>
    </subcellularLocation>
    <text evidence="1">Predominantly mitochondrial.</text>
</comment>
<comment type="domain">
    <text evidence="1">Consists of three domains, a large central CORE domain and two small peripheral domains, NMPbind and LID, which undergo movements during catalysis. The LID domain closes over the site of phosphoryl transfer upon ATP binding. Assembling and dissambling the active center during each catalytic cycle provides an effective means to prevent ATP hydrolysis.</text>
</comment>
<comment type="similarity">
    <text evidence="1">Belongs to the adenylate kinase family. AK2 subfamily.</text>
</comment>
<proteinExistence type="inferred from homology"/>
<reference key="1">
    <citation type="journal article" date="2002" name="Science">
        <title>The genome sequence of the malaria mosquito Anopheles gambiae.</title>
        <authorList>
            <person name="Holt R.A."/>
            <person name="Subramanian G.M."/>
            <person name="Halpern A."/>
            <person name="Sutton G.G."/>
            <person name="Charlab R."/>
            <person name="Nusskern D.R."/>
            <person name="Wincker P."/>
            <person name="Clark A.G."/>
            <person name="Ribeiro J.M.C."/>
            <person name="Wides R."/>
            <person name="Salzberg S.L."/>
            <person name="Loftus B.J."/>
            <person name="Yandell M.D."/>
            <person name="Majoros W.H."/>
            <person name="Rusch D.B."/>
            <person name="Lai Z."/>
            <person name="Kraft C.L."/>
            <person name="Abril J.F."/>
            <person name="Anthouard V."/>
            <person name="Arensburger P."/>
            <person name="Atkinson P.W."/>
            <person name="Baden H."/>
            <person name="de Berardinis V."/>
            <person name="Baldwin D."/>
            <person name="Benes V."/>
            <person name="Biedler J."/>
            <person name="Blass C."/>
            <person name="Bolanos R."/>
            <person name="Boscus D."/>
            <person name="Barnstead M."/>
            <person name="Cai S."/>
            <person name="Center A."/>
            <person name="Chaturverdi K."/>
            <person name="Christophides G.K."/>
            <person name="Chrystal M.A.M."/>
            <person name="Clamp M."/>
            <person name="Cravchik A."/>
            <person name="Curwen V."/>
            <person name="Dana A."/>
            <person name="Delcher A."/>
            <person name="Dew I."/>
            <person name="Evans C.A."/>
            <person name="Flanigan M."/>
            <person name="Grundschober-Freimoser A."/>
            <person name="Friedli L."/>
            <person name="Gu Z."/>
            <person name="Guan P."/>
            <person name="Guigo R."/>
            <person name="Hillenmeyer M.E."/>
            <person name="Hladun S.L."/>
            <person name="Hogan J.R."/>
            <person name="Hong Y.S."/>
            <person name="Hoover J."/>
            <person name="Jaillon O."/>
            <person name="Ke Z."/>
            <person name="Kodira C.D."/>
            <person name="Kokoza E."/>
            <person name="Koutsos A."/>
            <person name="Letunic I."/>
            <person name="Levitsky A.A."/>
            <person name="Liang Y."/>
            <person name="Lin J.-J."/>
            <person name="Lobo N.F."/>
            <person name="Lopez J.R."/>
            <person name="Malek J.A."/>
            <person name="McIntosh T.C."/>
            <person name="Meister S."/>
            <person name="Miller J.R."/>
            <person name="Mobarry C."/>
            <person name="Mongin E."/>
            <person name="Murphy S.D."/>
            <person name="O'Brochta D.A."/>
            <person name="Pfannkoch C."/>
            <person name="Qi R."/>
            <person name="Regier M.A."/>
            <person name="Remington K."/>
            <person name="Shao H."/>
            <person name="Sharakhova M.V."/>
            <person name="Sitter C.D."/>
            <person name="Shetty J."/>
            <person name="Smith T.J."/>
            <person name="Strong R."/>
            <person name="Sun J."/>
            <person name="Thomasova D."/>
            <person name="Ton L.Q."/>
            <person name="Topalis P."/>
            <person name="Tu Z.J."/>
            <person name="Unger M.F."/>
            <person name="Walenz B."/>
            <person name="Wang A.H."/>
            <person name="Wang J."/>
            <person name="Wang M."/>
            <person name="Wang X."/>
            <person name="Woodford K.J."/>
            <person name="Wortman J.R."/>
            <person name="Wu M."/>
            <person name="Yao A."/>
            <person name="Zdobnov E.M."/>
            <person name="Zhang H."/>
            <person name="Zhao Q."/>
            <person name="Zhao S."/>
            <person name="Zhu S.C."/>
            <person name="Zhimulev I."/>
            <person name="Coluzzi M."/>
            <person name="della Torre A."/>
            <person name="Roth C.W."/>
            <person name="Louis C."/>
            <person name="Kalush F."/>
            <person name="Mural R.J."/>
            <person name="Myers E.W."/>
            <person name="Adams M.D."/>
            <person name="Smith H.O."/>
            <person name="Broder S."/>
            <person name="Gardner M.J."/>
            <person name="Fraser C.M."/>
            <person name="Birney E."/>
            <person name="Bork P."/>
            <person name="Brey P.T."/>
            <person name="Venter J.C."/>
            <person name="Weissenbach J."/>
            <person name="Kafatos F.C."/>
            <person name="Collins F.H."/>
            <person name="Hoffman S.L."/>
        </authorList>
    </citation>
    <scope>NUCLEOTIDE SEQUENCE [LARGE SCALE GENOMIC DNA]</scope>
    <source>
        <strain>PEST</strain>
    </source>
</reference>
<organism>
    <name type="scientific">Anopheles gambiae</name>
    <name type="common">African malaria mosquito</name>
    <dbReference type="NCBI Taxonomy" id="7165"/>
    <lineage>
        <taxon>Eukaryota</taxon>
        <taxon>Metazoa</taxon>
        <taxon>Ecdysozoa</taxon>
        <taxon>Arthropoda</taxon>
        <taxon>Hexapoda</taxon>
        <taxon>Insecta</taxon>
        <taxon>Pterygota</taxon>
        <taxon>Neoptera</taxon>
        <taxon>Endopterygota</taxon>
        <taxon>Diptera</taxon>
        <taxon>Nematocera</taxon>
        <taxon>Culicoidea</taxon>
        <taxon>Culicidae</taxon>
        <taxon>Anophelinae</taxon>
        <taxon>Anopheles</taxon>
    </lineage>
</organism>
<dbReference type="EC" id="2.7.4.3" evidence="1"/>
<dbReference type="EMBL" id="AAAB01008807">
    <property type="protein sequence ID" value="EAA04739.2"/>
    <property type="molecule type" value="Genomic_DNA"/>
</dbReference>
<dbReference type="SMR" id="Q7QJX9"/>
<dbReference type="FunCoup" id="Q7QJX9">
    <property type="interactions" value="1671"/>
</dbReference>
<dbReference type="STRING" id="7165.Q7QJX9"/>
<dbReference type="PaxDb" id="7165-AGAP007722-PA"/>
<dbReference type="EnsemblMetazoa" id="AGAP007722-RA">
    <property type="protein sequence ID" value="AGAP007722-PA"/>
    <property type="gene ID" value="AGAP007722"/>
</dbReference>
<dbReference type="GeneID" id="1269521"/>
<dbReference type="KEGG" id="aga:1269521"/>
<dbReference type="CTD" id="204"/>
<dbReference type="VEuPathDB" id="VectorBase:AGAMI1_004298"/>
<dbReference type="VEuPathDB" id="VectorBase:AGAP007722"/>
<dbReference type="eggNOG" id="KOG3078">
    <property type="taxonomic scope" value="Eukaryota"/>
</dbReference>
<dbReference type="HOGENOM" id="CLU_032354_1_0_1"/>
<dbReference type="InParanoid" id="Q7QJX9"/>
<dbReference type="OMA" id="VYHEQTA"/>
<dbReference type="PhylomeDB" id="Q7QJX9"/>
<dbReference type="Proteomes" id="UP000007062">
    <property type="component" value="Chromosome 2L"/>
</dbReference>
<dbReference type="GO" id="GO:0005737">
    <property type="term" value="C:cytoplasm"/>
    <property type="evidence" value="ECO:0000318"/>
    <property type="project" value="GO_Central"/>
</dbReference>
<dbReference type="GO" id="GO:0005829">
    <property type="term" value="C:cytosol"/>
    <property type="evidence" value="ECO:0007669"/>
    <property type="project" value="UniProtKB-SubCell"/>
</dbReference>
<dbReference type="GO" id="GO:0005758">
    <property type="term" value="C:mitochondrial intermembrane space"/>
    <property type="evidence" value="ECO:0007669"/>
    <property type="project" value="UniProtKB-SubCell"/>
</dbReference>
<dbReference type="GO" id="GO:0005739">
    <property type="term" value="C:mitochondrion"/>
    <property type="evidence" value="ECO:0000318"/>
    <property type="project" value="GO_Central"/>
</dbReference>
<dbReference type="GO" id="GO:0004017">
    <property type="term" value="F:adenylate kinase activity"/>
    <property type="evidence" value="ECO:0000318"/>
    <property type="project" value="GO_Central"/>
</dbReference>
<dbReference type="GO" id="GO:0005524">
    <property type="term" value="F:ATP binding"/>
    <property type="evidence" value="ECO:0007669"/>
    <property type="project" value="UniProtKB-KW"/>
</dbReference>
<dbReference type="GO" id="GO:0006172">
    <property type="term" value="P:ADP biosynthetic process"/>
    <property type="evidence" value="ECO:0000318"/>
    <property type="project" value="GO_Central"/>
</dbReference>
<dbReference type="GO" id="GO:0046033">
    <property type="term" value="P:AMP metabolic process"/>
    <property type="evidence" value="ECO:0007669"/>
    <property type="project" value="UniProtKB-UniRule"/>
</dbReference>
<dbReference type="GO" id="GO:0046034">
    <property type="term" value="P:ATP metabolic process"/>
    <property type="evidence" value="ECO:0007669"/>
    <property type="project" value="UniProtKB-UniRule"/>
</dbReference>
<dbReference type="CDD" id="cd01428">
    <property type="entry name" value="ADK"/>
    <property type="match status" value="1"/>
</dbReference>
<dbReference type="FunFam" id="3.40.50.300:FF:000106">
    <property type="entry name" value="Adenylate kinase mitochondrial"/>
    <property type="match status" value="1"/>
</dbReference>
<dbReference type="Gene3D" id="3.40.50.300">
    <property type="entry name" value="P-loop containing nucleotide triphosphate hydrolases"/>
    <property type="match status" value="1"/>
</dbReference>
<dbReference type="HAMAP" id="MF_00235">
    <property type="entry name" value="Adenylate_kinase_Adk"/>
    <property type="match status" value="1"/>
</dbReference>
<dbReference type="HAMAP" id="MF_03168">
    <property type="entry name" value="Adenylate_kinase_AK2"/>
    <property type="match status" value="1"/>
</dbReference>
<dbReference type="InterPro" id="IPR006259">
    <property type="entry name" value="Adenyl_kin_sub"/>
</dbReference>
<dbReference type="InterPro" id="IPR000850">
    <property type="entry name" value="Adenylat/UMP-CMP_kin"/>
</dbReference>
<dbReference type="InterPro" id="IPR033690">
    <property type="entry name" value="Adenylat_kinase_CS"/>
</dbReference>
<dbReference type="InterPro" id="IPR007862">
    <property type="entry name" value="Adenylate_kinase_lid-dom"/>
</dbReference>
<dbReference type="InterPro" id="IPR028587">
    <property type="entry name" value="AK2"/>
</dbReference>
<dbReference type="InterPro" id="IPR027417">
    <property type="entry name" value="P-loop_NTPase"/>
</dbReference>
<dbReference type="NCBIfam" id="TIGR01351">
    <property type="entry name" value="adk"/>
    <property type="match status" value="1"/>
</dbReference>
<dbReference type="NCBIfam" id="NF001381">
    <property type="entry name" value="PRK00279.1-3"/>
    <property type="match status" value="1"/>
</dbReference>
<dbReference type="NCBIfam" id="NF011100">
    <property type="entry name" value="PRK14527.1"/>
    <property type="match status" value="1"/>
</dbReference>
<dbReference type="PANTHER" id="PTHR23359">
    <property type="entry name" value="NUCLEOTIDE KINASE"/>
    <property type="match status" value="1"/>
</dbReference>
<dbReference type="Pfam" id="PF00406">
    <property type="entry name" value="ADK"/>
    <property type="match status" value="1"/>
</dbReference>
<dbReference type="Pfam" id="PF05191">
    <property type="entry name" value="ADK_lid"/>
    <property type="match status" value="1"/>
</dbReference>
<dbReference type="PRINTS" id="PR00094">
    <property type="entry name" value="ADENYLTKNASE"/>
</dbReference>
<dbReference type="SUPFAM" id="SSF52540">
    <property type="entry name" value="P-loop containing nucleoside triphosphate hydrolases"/>
    <property type="match status" value="1"/>
</dbReference>
<dbReference type="PROSITE" id="PS00113">
    <property type="entry name" value="ADENYLATE_KINASE"/>
    <property type="match status" value="1"/>
</dbReference>
<evidence type="ECO:0000255" key="1">
    <source>
        <dbReference type="HAMAP-Rule" id="MF_03168"/>
    </source>
</evidence>
<sequence length="240" mass="26431">MAPNAAELKVKPASDSTGINAILLGPPGSGKGTQAPLLKEKYCVCHLSTGDMLRAEIASGSKLGAQLKKVMDEGKLVSDELVVDMIDSNLDKPECRNGFLLDGFPRTVVQAEKLDNLLEKRNTGLDAVIEFGIDDSLLVRRITGRLIHQASGRSYHEEFAPPKVPMRDDETGEPLMRRSDDNAQALVKRLESYHRQTKPLADYYALRGLHFRVDAAKSASDVFANIDSIFTKQRAHRLGF</sequence>
<gene>
    <name evidence="1" type="primary">Adk2</name>
    <name type="ORF">AGAP007722</name>
</gene>
<accession>Q7QJX9</accession>